<protein>
    <recommendedName>
        <fullName>Myc proto-oncogene protein</fullName>
    </recommendedName>
    <alternativeName>
        <fullName>Proto-oncogene c-Myc</fullName>
    </alternativeName>
    <alternativeName>
        <fullName>Transcription factor p64</fullName>
    </alternativeName>
</protein>
<proteinExistence type="inferred from homology"/>
<comment type="function">
    <text evidence="2 3">Transcription factor that binds DNA in a non-specific manner, yet also specifically recognizes the core sequence 5'-CAC[GA]TG-3'. Activates the transcription of growth-related genes. Binds to the VEGFA promoter, promoting VEGFA production and subsequent sprouting angiogenesis. Regulator of somatic reprogramming, controls self-renewal of embryonic stem cells. Functions with TAF6L to activate target gene expression through RNA polymerase II pause release (By similarity). Positively regulates transcription of HNRNPA1, HNRNPA2 and PTBP1 which in turn regulate splicing of pyruvate kinase PKM by binding repressively to sequences flanking PKM exon 9, inhibiting exon 9 inclusion and resulting in exon 10 inclusion and production of the PKM M2 isoform (By similarity).</text>
</comment>
<comment type="subunit">
    <text evidence="2 3">Efficient DNA binding requires dimerization with another bHLH protein. Binds DNA as a heterodimer with MAX (By similarity). Interacts with TAF1C and SPAG9. Interacts with PARP10. Interacts with KDM5A and KDM5B. Interacts (when phosphorylated at Thr-58 and Ser-62) with FBXW7. Interacts with PIM2. Interacts with RIOX1. The heterodimer MYC:MAX interacts with ABI1; the interaction may enhance MYC:MAX transcriptional activity. Interacts with TRIM6 (By similarity). Interacts with NPM1; the binary complex is recruited to the promoter of MYC target genes and enhances their transcription (By similarity). Interacts with NUP205 (By similarity). Interacts with HEATR1; the interaction is required for localization of MYC to the nucleolus (By similarity).</text>
</comment>
<comment type="subcellular location">
    <subcellularLocation>
        <location evidence="2">Nucleus</location>
        <location evidence="2">Nucleoplasm</location>
    </subcellularLocation>
    <subcellularLocation>
        <location evidence="2">Nucleus</location>
        <location evidence="2">Nucleolus</location>
    </subcellularLocation>
    <subcellularLocation>
        <location evidence="2">Nucleus</location>
    </subcellularLocation>
    <subcellularLocation>
        <location evidence="2">Cytoplasm</location>
    </subcellularLocation>
    <subcellularLocation>
        <location evidence="2">Chromosome</location>
    </subcellularLocation>
    <text evidence="2">Association with chromatin is reduced by hyperphosphorylation. Localization to the nucleolus is dependent on HEATR1.</text>
</comment>
<comment type="domain">
    <text evidence="2">The 9aaTAD motif is a transactivation domain present in a large number of yeast and animal transcription factors.</text>
</comment>
<comment type="PTM">
    <text evidence="2 3">Phosphorylated by PRKDC (By similarity). Phosphorylation at Ser-329 by PIM2 leads to the stabilization of MYC (By similarity). Phosphorylation at Ser-62 by CDK2 prevents Ras-induced senescence. Phosphorylated at Ser-62 by DYRK2; this primes the protein for subsequent phosphorylation by GSK3B at Thr-58. Phosphorylation at Thr-58 and Ser-62 by GSK3 is required for ubiquitination and degradation by the proteasome. Dephosphorylation at multiple sites by the PNUTS-PP1 complex promotes MYC stability by preventing ubiquitination by the SCF(FBXW7) complex. Dephosphorylation at Ser-62 by protein phosphatase 2A (PPP2CA) promotes its degradation; interaction with PPP2CA is enhanced by AMBRA1 (By similarity).</text>
</comment>
<comment type="PTM">
    <text evidence="2 3">Ubiquitinated by the SCF(FBXW7) complex when phosphorylated at Thr-58 and Ser-62, leading to its degradation by the proteasome. Ubiquitination is counteracted by USP28 in the nucleoplasm and USP36 in the nucleolus, both interacting with of FBXW7, leading to its deubiquitination and preventing degradation. Also polyubiquitinated by the DCX(TRPC4AP) complex. Ubiquitinated by UBR5 when not forming a heterodimer with another bHLH protein, leading to its degradation: UBR5 recognizes and binds a degron that is only available upon heterodimer dissociation (By similarity). Ubiquitinated by TRIM6 in a phosphorylation-independent manner.</text>
</comment>
<keyword id="KW-0007">Acetylation</keyword>
<keyword id="KW-0010">Activator</keyword>
<keyword id="KW-0158">Chromosome</keyword>
<keyword id="KW-0963">Cytoplasm</keyword>
<keyword id="KW-0238">DNA-binding</keyword>
<keyword id="KW-0325">Glycoprotein</keyword>
<keyword id="KW-1017">Isopeptide bond</keyword>
<keyword id="KW-0539">Nucleus</keyword>
<keyword id="KW-0597">Phosphoprotein</keyword>
<keyword id="KW-0656">Proto-oncogene</keyword>
<keyword id="KW-0804">Transcription</keyword>
<keyword id="KW-0805">Transcription regulation</keyword>
<keyword id="KW-0832">Ubl conjugation</keyword>
<sequence>MPLNVSFTDWNYDLEYDSVQPYFYCDEEENFYQQQQQSELQPPAPSEDIWKKFELLPTPPLSPSRRSGLCSPSYVAVASFSPRGDDDGGGGSFSTADQLEMVTELLGGDMVNQSFICDPDDETFIKNIIIQDCMWSGFSAAAKLVSEKLASYQAARKDSSSPSPARGHGGCSTSSLYLQDLSAAASECIDPSVVFPYPLNDSSSPKPCASPDSTAFSPSSDSLLSSTESSPQASPEPLTLHEETPPTTSSDSEEEQEDEEEIDVVSVEKRQPPAKRSESGSPSAGGHSKPPHSPLVLKRCHVSTHQHNYAAPPSTRKDYPAAKRAKLDSGRVLKQISNNRKCASPRSSDTEENDKRRTHNVLERQRRNELKRSFFALRDQIPELENNEKAPKVVILKKATAYILSVQAEEQKLISEKDLLRKRREQLKHKLEQLRNSCA</sequence>
<feature type="chain" id="PRO_0000127291" description="Myc proto-oncogene protein">
    <location>
        <begin position="1"/>
        <end position="439"/>
    </location>
</feature>
<feature type="domain" description="bHLH" evidence="4">
    <location>
        <begin position="354"/>
        <end position="406"/>
    </location>
</feature>
<feature type="region of interest" description="Disordered" evidence="5">
    <location>
        <begin position="201"/>
        <end position="364"/>
    </location>
</feature>
<feature type="region of interest" description="Leucine-zipper">
    <location>
        <begin position="413"/>
        <end position="434"/>
    </location>
</feature>
<feature type="short sequence motif" description="9aaTAD" evidence="2">
    <location>
        <begin position="100"/>
        <end position="108"/>
    </location>
</feature>
<feature type="short sequence motif" description="UBR5-degron" evidence="2">
    <location>
        <begin position="355"/>
        <end position="364"/>
    </location>
</feature>
<feature type="compositionally biased region" description="Low complexity" evidence="5">
    <location>
        <begin position="210"/>
        <end position="238"/>
    </location>
</feature>
<feature type="compositionally biased region" description="Acidic residues" evidence="5">
    <location>
        <begin position="251"/>
        <end position="263"/>
    </location>
</feature>
<feature type="compositionally biased region" description="Basic and acidic residues" evidence="5">
    <location>
        <begin position="266"/>
        <end position="278"/>
    </location>
</feature>
<feature type="compositionally biased region" description="Basic and acidic residues" evidence="5">
    <location>
        <begin position="315"/>
        <end position="331"/>
    </location>
</feature>
<feature type="compositionally biased region" description="Polar residues" evidence="5">
    <location>
        <begin position="335"/>
        <end position="347"/>
    </location>
</feature>
<feature type="modified residue" description="Phosphoserine" evidence="2">
    <location>
        <position position="6"/>
    </location>
</feature>
<feature type="modified residue" description="Phosphothreonine" evidence="2">
    <location>
        <position position="8"/>
    </location>
</feature>
<feature type="modified residue" description="Phosphothreonine; by GSK3; alternate" evidence="2">
    <location>
        <position position="58"/>
    </location>
</feature>
<feature type="modified residue" description="Phosphoserine; by DYRK2, GSK3 and CDK2" evidence="2">
    <location>
        <position position="62"/>
    </location>
</feature>
<feature type="modified residue" description="Phosphoserine" evidence="2">
    <location>
        <position position="71"/>
    </location>
</feature>
<feature type="modified residue" description="Phosphoserine" evidence="2">
    <location>
        <position position="81"/>
    </location>
</feature>
<feature type="modified residue" description="N6-acetyllysine; by PCAF; alternate" evidence="2">
    <location>
        <position position="143"/>
    </location>
</feature>
<feature type="modified residue" description="N6-acetyllysine; alternate" evidence="2">
    <location>
        <position position="148"/>
    </location>
</feature>
<feature type="modified residue" description="Phosphoserine" evidence="2">
    <location>
        <position position="151"/>
    </location>
</feature>
<feature type="modified residue" description="N6-acetyllysine; by PCAF" evidence="2">
    <location>
        <position position="157"/>
    </location>
</feature>
<feature type="modified residue" description="Phosphoserine" evidence="2">
    <location>
        <position position="159"/>
    </location>
</feature>
<feature type="modified residue" description="Phosphoserine" evidence="2">
    <location>
        <position position="161"/>
    </location>
</feature>
<feature type="modified residue" description="N6-acetyllysine; by PCAF" evidence="2">
    <location>
        <position position="275"/>
    </location>
</feature>
<feature type="modified residue" description="Phosphoserine" evidence="2">
    <location>
        <position position="293"/>
    </location>
</feature>
<feature type="modified residue" description="Phosphoserine" evidence="2">
    <location>
        <position position="314"/>
    </location>
</feature>
<feature type="modified residue" description="Phosphothreonine" evidence="2">
    <location>
        <position position="315"/>
    </location>
</feature>
<feature type="modified residue" description="N6-acetyllysine; by PCAF" evidence="2">
    <location>
        <position position="317"/>
    </location>
</feature>
<feature type="modified residue" description="N6-acetyllysine; by PCAF" evidence="2">
    <location>
        <position position="323"/>
    </location>
</feature>
<feature type="modified residue" description="Phosphoserine; by PIM2; in vitro" evidence="3">
    <location>
        <position position="329"/>
    </location>
</feature>
<feature type="modified residue" description="Phosphoserine" evidence="2">
    <location>
        <position position="344"/>
    </location>
</feature>
<feature type="modified residue" description="Phosphoserine" evidence="2">
    <location>
        <position position="347"/>
    </location>
</feature>
<feature type="modified residue" description="Phosphoserine" evidence="2">
    <location>
        <position position="348"/>
    </location>
</feature>
<feature type="modified residue" description="N6-acetyllysine; by PCAF" evidence="2">
    <location>
        <position position="371"/>
    </location>
</feature>
<feature type="glycosylation site" description="O-linked (GlcNAc) threonine; alternate" evidence="1">
    <location>
        <position position="58"/>
    </location>
</feature>
<feature type="cross-link" description="Glycyl lysine isopeptide (Lys-Gly) (interchain with G-Cter in SUMO2)" evidence="2">
    <location>
        <position position="52"/>
    </location>
</feature>
<feature type="cross-link" description="Glycyl lysine isopeptide (Lys-Gly) (interchain with G-Cter in SUMO2); alternate" evidence="2">
    <location>
        <position position="143"/>
    </location>
</feature>
<feature type="cross-link" description="Glycyl lysine isopeptide (Lys-Gly) (interchain with G-Cter in SUMO2); alternate" evidence="2">
    <location>
        <position position="148"/>
    </location>
</feature>
<feature type="cross-link" description="Glycyl lysine isopeptide (Lys-Gly) (interchain with G-Cter in SUMO2)" evidence="2">
    <location>
        <position position="298"/>
    </location>
</feature>
<name>MYC_GALVR</name>
<dbReference type="EMBL" id="AF160483">
    <property type="protein sequence ID" value="AAF80393.1"/>
    <property type="molecule type" value="Genomic_DNA"/>
</dbReference>
<dbReference type="EMBL" id="AF160482">
    <property type="protein sequence ID" value="AAF80393.1"/>
    <property type="status" value="JOINED"/>
    <property type="molecule type" value="Genomic_DNA"/>
</dbReference>
<dbReference type="SMR" id="Q9MZU0"/>
<dbReference type="GlyCosmos" id="Q9MZU0">
    <property type="glycosylation" value="1 site, No reported glycans"/>
</dbReference>
<dbReference type="Proteomes" id="UP000694923">
    <property type="component" value="Unplaced"/>
</dbReference>
<dbReference type="GO" id="GO:0005737">
    <property type="term" value="C:cytoplasm"/>
    <property type="evidence" value="ECO:0007669"/>
    <property type="project" value="UniProtKB-SubCell"/>
</dbReference>
<dbReference type="GO" id="GO:0005730">
    <property type="term" value="C:nucleolus"/>
    <property type="evidence" value="ECO:0000250"/>
    <property type="project" value="UniProtKB"/>
</dbReference>
<dbReference type="GO" id="GO:0005654">
    <property type="term" value="C:nucleoplasm"/>
    <property type="evidence" value="ECO:0000250"/>
    <property type="project" value="UniProtKB"/>
</dbReference>
<dbReference type="GO" id="GO:0005634">
    <property type="term" value="C:nucleus"/>
    <property type="evidence" value="ECO:0000250"/>
    <property type="project" value="UniProtKB"/>
</dbReference>
<dbReference type="GO" id="GO:0003677">
    <property type="term" value="F:DNA binding"/>
    <property type="evidence" value="ECO:0000250"/>
    <property type="project" value="UniProtKB"/>
</dbReference>
<dbReference type="GO" id="GO:0000981">
    <property type="term" value="F:DNA-binding transcription factor activity, RNA polymerase II-specific"/>
    <property type="evidence" value="ECO:0000250"/>
    <property type="project" value="UniProtKB"/>
</dbReference>
<dbReference type="GO" id="GO:0070888">
    <property type="term" value="F:E-box binding"/>
    <property type="evidence" value="ECO:0000250"/>
    <property type="project" value="UniProtKB"/>
</dbReference>
<dbReference type="GO" id="GO:0046983">
    <property type="term" value="F:protein dimerization activity"/>
    <property type="evidence" value="ECO:0007669"/>
    <property type="project" value="InterPro"/>
</dbReference>
<dbReference type="GO" id="GO:0044877">
    <property type="term" value="F:protein-containing complex binding"/>
    <property type="evidence" value="ECO:0000250"/>
    <property type="project" value="UniProtKB"/>
</dbReference>
<dbReference type="GO" id="GO:0006338">
    <property type="term" value="P:chromatin remodeling"/>
    <property type="evidence" value="ECO:0000250"/>
    <property type="project" value="UniProtKB"/>
</dbReference>
<dbReference type="GO" id="GO:0051276">
    <property type="term" value="P:chromosome organization"/>
    <property type="evidence" value="ECO:0000250"/>
    <property type="project" value="UniProtKB"/>
</dbReference>
<dbReference type="GO" id="GO:0006974">
    <property type="term" value="P:DNA damage response"/>
    <property type="evidence" value="ECO:0000250"/>
    <property type="project" value="UniProtKB"/>
</dbReference>
<dbReference type="GO" id="GO:0000082">
    <property type="term" value="P:G1/S transition of mitotic cell cycle"/>
    <property type="evidence" value="ECO:0000250"/>
    <property type="project" value="UniProtKB"/>
</dbReference>
<dbReference type="GO" id="GO:0006879">
    <property type="term" value="P:intracellular iron ion homeostasis"/>
    <property type="evidence" value="ECO:0000250"/>
    <property type="project" value="UniProtKB"/>
</dbReference>
<dbReference type="GO" id="GO:0000165">
    <property type="term" value="P:MAPK cascade"/>
    <property type="evidence" value="ECO:0000250"/>
    <property type="project" value="UniProtKB"/>
</dbReference>
<dbReference type="GO" id="GO:0043066">
    <property type="term" value="P:negative regulation of apoptotic process"/>
    <property type="evidence" value="ECO:0000250"/>
    <property type="project" value="UniProtKB"/>
</dbReference>
<dbReference type="GO" id="GO:0051782">
    <property type="term" value="P:negative regulation of cell division"/>
    <property type="evidence" value="ECO:0000250"/>
    <property type="project" value="UniProtKB"/>
</dbReference>
<dbReference type="GO" id="GO:0045656">
    <property type="term" value="P:negative regulation of monocyte differentiation"/>
    <property type="evidence" value="ECO:0000250"/>
    <property type="project" value="UniProtKB"/>
</dbReference>
<dbReference type="GO" id="GO:0032873">
    <property type="term" value="P:negative regulation of stress-activated MAPK cascade"/>
    <property type="evidence" value="ECO:0000250"/>
    <property type="project" value="UniProtKB"/>
</dbReference>
<dbReference type="GO" id="GO:0045893">
    <property type="term" value="P:positive regulation of DNA-templated transcription"/>
    <property type="evidence" value="ECO:0000250"/>
    <property type="project" value="UniProtKB"/>
</dbReference>
<dbReference type="GO" id="GO:0050679">
    <property type="term" value="P:positive regulation of epithelial cell proliferation"/>
    <property type="evidence" value="ECO:0000250"/>
    <property type="project" value="UniProtKB"/>
</dbReference>
<dbReference type="GO" id="GO:0048146">
    <property type="term" value="P:positive regulation of fibroblast proliferation"/>
    <property type="evidence" value="ECO:0000250"/>
    <property type="project" value="UniProtKB"/>
</dbReference>
<dbReference type="GO" id="GO:0045944">
    <property type="term" value="P:positive regulation of transcription by RNA polymerase II"/>
    <property type="evidence" value="ECO:0000250"/>
    <property type="project" value="UniProtKB"/>
</dbReference>
<dbReference type="GO" id="GO:0006355">
    <property type="term" value="P:regulation of DNA-templated transcription"/>
    <property type="evidence" value="ECO:0000250"/>
    <property type="project" value="UniProtKB"/>
</dbReference>
<dbReference type="GO" id="GO:1904672">
    <property type="term" value="P:regulation of somatic stem cell population maintenance"/>
    <property type="evidence" value="ECO:0000250"/>
    <property type="project" value="UniProtKB"/>
</dbReference>
<dbReference type="GO" id="GO:0032204">
    <property type="term" value="P:regulation of telomere maintenance"/>
    <property type="evidence" value="ECO:0000250"/>
    <property type="project" value="UniProtKB"/>
</dbReference>
<dbReference type="GO" id="GO:0009410">
    <property type="term" value="P:response to xenobiotic stimulus"/>
    <property type="evidence" value="ECO:0000250"/>
    <property type="project" value="UniProtKB"/>
</dbReference>
<dbReference type="GO" id="GO:0016072">
    <property type="term" value="P:rRNA metabolic process"/>
    <property type="evidence" value="ECO:0000250"/>
    <property type="project" value="UniProtKB"/>
</dbReference>
<dbReference type="CDD" id="cd11458">
    <property type="entry name" value="bHLHzip_c-Myc"/>
    <property type="match status" value="1"/>
</dbReference>
<dbReference type="FunFam" id="4.10.280.10:FF:000019">
    <property type="entry name" value="Myc proto-oncogene protein"/>
    <property type="match status" value="1"/>
</dbReference>
<dbReference type="Gene3D" id="4.10.280.10">
    <property type="entry name" value="Helix-loop-helix DNA-binding domain"/>
    <property type="match status" value="1"/>
</dbReference>
<dbReference type="InterPro" id="IPR011598">
    <property type="entry name" value="bHLH_dom"/>
</dbReference>
<dbReference type="InterPro" id="IPR036638">
    <property type="entry name" value="HLH_DNA-bd_sf"/>
</dbReference>
<dbReference type="InterPro" id="IPR003327">
    <property type="entry name" value="Myc-LZ"/>
</dbReference>
<dbReference type="InterPro" id="IPR050433">
    <property type="entry name" value="Myc_transcription_factors"/>
</dbReference>
<dbReference type="InterPro" id="IPR002418">
    <property type="entry name" value="Tscrpt_reg_Myc"/>
</dbReference>
<dbReference type="InterPro" id="IPR012682">
    <property type="entry name" value="Tscrpt_reg_Myc_N"/>
</dbReference>
<dbReference type="PANTHER" id="PTHR45851">
    <property type="entry name" value="MYC PROTO-ONCOGENE"/>
    <property type="match status" value="1"/>
</dbReference>
<dbReference type="Pfam" id="PF00010">
    <property type="entry name" value="HLH"/>
    <property type="match status" value="1"/>
</dbReference>
<dbReference type="Pfam" id="PF02344">
    <property type="entry name" value="Myc-LZ"/>
    <property type="match status" value="1"/>
</dbReference>
<dbReference type="Pfam" id="PF01056">
    <property type="entry name" value="Myc_N"/>
    <property type="match status" value="1"/>
</dbReference>
<dbReference type="PIRSF" id="PIRSF001705">
    <property type="entry name" value="Myc_protein"/>
    <property type="match status" value="1"/>
</dbReference>
<dbReference type="PRINTS" id="PR00044">
    <property type="entry name" value="LEUZIPPRMYC"/>
</dbReference>
<dbReference type="SMART" id="SM00353">
    <property type="entry name" value="HLH"/>
    <property type="match status" value="1"/>
</dbReference>
<dbReference type="SUPFAM" id="SSF47459">
    <property type="entry name" value="HLH, helix-loop-helix DNA-binding domain"/>
    <property type="match status" value="1"/>
</dbReference>
<dbReference type="PROSITE" id="PS50888">
    <property type="entry name" value="BHLH"/>
    <property type="match status" value="1"/>
</dbReference>
<gene>
    <name type="primary">MYC</name>
</gene>
<evidence type="ECO:0000250" key="1"/>
<evidence type="ECO:0000250" key="2">
    <source>
        <dbReference type="UniProtKB" id="P01106"/>
    </source>
</evidence>
<evidence type="ECO:0000250" key="3">
    <source>
        <dbReference type="UniProtKB" id="P01108"/>
    </source>
</evidence>
<evidence type="ECO:0000255" key="4">
    <source>
        <dbReference type="PROSITE-ProRule" id="PRU00981"/>
    </source>
</evidence>
<evidence type="ECO:0000256" key="5">
    <source>
        <dbReference type="SAM" id="MobiDB-lite"/>
    </source>
</evidence>
<organism>
    <name type="scientific">Galeopterus variegatus</name>
    <name type="common">Malayan flying lemur</name>
    <name type="synonym">Cynocephalus variegatus</name>
    <dbReference type="NCBI Taxonomy" id="482537"/>
    <lineage>
        <taxon>Eukaryota</taxon>
        <taxon>Metazoa</taxon>
        <taxon>Chordata</taxon>
        <taxon>Craniata</taxon>
        <taxon>Vertebrata</taxon>
        <taxon>Euteleostomi</taxon>
        <taxon>Mammalia</taxon>
        <taxon>Eutheria</taxon>
        <taxon>Euarchontoglires</taxon>
        <taxon>Dermoptera</taxon>
        <taxon>Cynocephalidae</taxon>
        <taxon>Galeopterus</taxon>
    </lineage>
</organism>
<accession>Q9MZU0</accession>
<reference key="1">
    <citation type="journal article" date="2000" name="Syst. Biol.">
        <title>c-myc gene sequences and the phylogeny of bats and other eutherian mammals.</title>
        <authorList>
            <person name="Miyamoto M.M."/>
            <person name="Porter C.A."/>
            <person name="Goodman M."/>
        </authorList>
    </citation>
    <scope>NUCLEOTIDE SEQUENCE [GENOMIC DNA]</scope>
</reference>